<dbReference type="EMBL" id="AC004473">
    <property type="protein sequence ID" value="AAC24067.1"/>
    <property type="molecule type" value="Genomic_DNA"/>
</dbReference>
<dbReference type="EMBL" id="CP002684">
    <property type="protein sequence ID" value="AEE33682.1"/>
    <property type="molecule type" value="Genomic_DNA"/>
</dbReference>
<dbReference type="EMBL" id="DQ446379">
    <property type="protein sequence ID" value="ABE65727.1"/>
    <property type="molecule type" value="mRNA"/>
</dbReference>
<dbReference type="PIR" id="T02290">
    <property type="entry name" value="T02290"/>
</dbReference>
<dbReference type="RefSeq" id="NP_176243.1">
    <molecule id="Q1PFI4-1"/>
    <property type="nucleotide sequence ID" value="NM_104727.1"/>
</dbReference>
<dbReference type="STRING" id="3702.Q1PFI4"/>
<dbReference type="PaxDb" id="3702-AT1G60400.1"/>
<dbReference type="ProteomicsDB" id="222565">
    <molecule id="Q1PFI4-1"/>
</dbReference>
<dbReference type="EnsemblPlants" id="AT1G60400.1">
    <molecule id="Q1PFI4-1"/>
    <property type="protein sequence ID" value="AT1G60400.1"/>
    <property type="gene ID" value="AT1G60400"/>
</dbReference>
<dbReference type="GeneID" id="842335"/>
<dbReference type="Gramene" id="AT1G60400.1">
    <molecule id="Q1PFI4-1"/>
    <property type="protein sequence ID" value="AT1G60400.1"/>
    <property type="gene ID" value="AT1G60400"/>
</dbReference>
<dbReference type="KEGG" id="ath:AT1G60400"/>
<dbReference type="Araport" id="AT1G60400"/>
<dbReference type="TAIR" id="AT1G60400">
    <property type="gene designation" value="PEG3"/>
</dbReference>
<dbReference type="HOGENOM" id="CLU_010721_1_3_1"/>
<dbReference type="InParanoid" id="Q1PFI4"/>
<dbReference type="OMA" id="HWRNLWL"/>
<dbReference type="PhylomeDB" id="Q1PFI4"/>
<dbReference type="PRO" id="PR:Q1PFI4"/>
<dbReference type="Proteomes" id="UP000006548">
    <property type="component" value="Chromosome 1"/>
</dbReference>
<dbReference type="ExpressionAtlas" id="Q1PFI4">
    <property type="expression patterns" value="baseline and differential"/>
</dbReference>
<dbReference type="CDD" id="cd22160">
    <property type="entry name" value="F-box_AtFBL13-like"/>
    <property type="match status" value="1"/>
</dbReference>
<dbReference type="Gene3D" id="1.20.1280.50">
    <property type="match status" value="1"/>
</dbReference>
<dbReference type="Gene3D" id="3.80.10.10">
    <property type="entry name" value="Ribonuclease Inhibitor"/>
    <property type="match status" value="1"/>
</dbReference>
<dbReference type="InterPro" id="IPR036047">
    <property type="entry name" value="F-box-like_dom_sf"/>
</dbReference>
<dbReference type="InterPro" id="IPR053781">
    <property type="entry name" value="F-box_AtFBL13-like"/>
</dbReference>
<dbReference type="InterPro" id="IPR001810">
    <property type="entry name" value="F-box_dom"/>
</dbReference>
<dbReference type="InterPro" id="IPR050232">
    <property type="entry name" value="FBL13/AtMIF1-like"/>
</dbReference>
<dbReference type="InterPro" id="IPR032675">
    <property type="entry name" value="LRR_dom_sf"/>
</dbReference>
<dbReference type="InterPro" id="IPR055411">
    <property type="entry name" value="LRR_FXL15/At3g58940/PEG3-like"/>
</dbReference>
<dbReference type="PANTHER" id="PTHR31900">
    <property type="entry name" value="F-BOX/RNI SUPERFAMILY PROTEIN-RELATED"/>
    <property type="match status" value="1"/>
</dbReference>
<dbReference type="PANTHER" id="PTHR31900:SF33">
    <property type="entry name" value="PROTEIN WITH RNI-LIKE_FBD-LIKE DOMAIN"/>
    <property type="match status" value="1"/>
</dbReference>
<dbReference type="Pfam" id="PF00646">
    <property type="entry name" value="F-box"/>
    <property type="match status" value="1"/>
</dbReference>
<dbReference type="Pfam" id="PF24758">
    <property type="entry name" value="LRR_At5g56370"/>
    <property type="match status" value="1"/>
</dbReference>
<dbReference type="SMART" id="SM00256">
    <property type="entry name" value="FBOX"/>
    <property type="match status" value="1"/>
</dbReference>
<dbReference type="SUPFAM" id="SSF81383">
    <property type="entry name" value="F-box domain"/>
    <property type="match status" value="1"/>
</dbReference>
<dbReference type="SUPFAM" id="SSF52058">
    <property type="entry name" value="L domain-like"/>
    <property type="match status" value="1"/>
</dbReference>
<dbReference type="PROSITE" id="PS50181">
    <property type="entry name" value="FBOX"/>
    <property type="match status" value="1"/>
</dbReference>
<organism>
    <name type="scientific">Arabidopsis thaliana</name>
    <name type="common">Mouse-ear cress</name>
    <dbReference type="NCBI Taxonomy" id="3702"/>
    <lineage>
        <taxon>Eukaryota</taxon>
        <taxon>Viridiplantae</taxon>
        <taxon>Streptophyta</taxon>
        <taxon>Embryophyta</taxon>
        <taxon>Tracheophyta</taxon>
        <taxon>Spermatophyta</taxon>
        <taxon>Magnoliopsida</taxon>
        <taxon>eudicotyledons</taxon>
        <taxon>Gunneridae</taxon>
        <taxon>Pentapetalae</taxon>
        <taxon>rosids</taxon>
        <taxon>malvids</taxon>
        <taxon>Brassicales</taxon>
        <taxon>Brassicaceae</taxon>
        <taxon>Camelineae</taxon>
        <taxon>Arabidopsis</taxon>
    </lineage>
</organism>
<proteinExistence type="evidence at transcript level"/>
<comment type="alternative products">
    <event type="alternative splicing"/>
    <isoform>
        <id>Q1PFI4-1</id>
        <name>1</name>
        <sequence type="displayed"/>
    </isoform>
    <isoform>
        <id>Q1PFI4-2</id>
        <name>2</name>
        <sequence type="described" ref="VSP_036625"/>
    </isoform>
</comment>
<keyword id="KW-0025">Alternative splicing</keyword>
<keyword id="KW-1185">Reference proteome</keyword>
<feature type="chain" id="PRO_0000283343" description="F-box protein At1g60400">
    <location>
        <begin position="1"/>
        <end position="403"/>
    </location>
</feature>
<feature type="domain" description="F-box" evidence="1">
    <location>
        <begin position="13"/>
        <end position="59"/>
    </location>
</feature>
<feature type="splice variant" id="VSP_036625" description="In isoform 2." evidence="2">
    <location>
        <begin position="73"/>
        <end position="361"/>
    </location>
</feature>
<evidence type="ECO:0000255" key="1">
    <source>
        <dbReference type="PROSITE-ProRule" id="PRU00080"/>
    </source>
</evidence>
<evidence type="ECO:0000303" key="2">
    <source>
    </source>
</evidence>
<accession>Q1PFI4</accession>
<accession>O80761</accession>
<protein>
    <recommendedName>
        <fullName>F-box protein At1g60400</fullName>
    </recommendedName>
</protein>
<name>FB69_ARATH</name>
<reference key="1">
    <citation type="journal article" date="2000" name="Nature">
        <title>Sequence and analysis of chromosome 1 of the plant Arabidopsis thaliana.</title>
        <authorList>
            <person name="Theologis A."/>
            <person name="Ecker J.R."/>
            <person name="Palm C.J."/>
            <person name="Federspiel N.A."/>
            <person name="Kaul S."/>
            <person name="White O."/>
            <person name="Alonso J."/>
            <person name="Altafi H."/>
            <person name="Araujo R."/>
            <person name="Bowman C.L."/>
            <person name="Brooks S.Y."/>
            <person name="Buehler E."/>
            <person name="Chan A."/>
            <person name="Chao Q."/>
            <person name="Chen H."/>
            <person name="Cheuk R.F."/>
            <person name="Chin C.W."/>
            <person name="Chung M.K."/>
            <person name="Conn L."/>
            <person name="Conway A.B."/>
            <person name="Conway A.R."/>
            <person name="Creasy T.H."/>
            <person name="Dewar K."/>
            <person name="Dunn P."/>
            <person name="Etgu P."/>
            <person name="Feldblyum T.V."/>
            <person name="Feng J.-D."/>
            <person name="Fong B."/>
            <person name="Fujii C.Y."/>
            <person name="Gill J.E."/>
            <person name="Goldsmith A.D."/>
            <person name="Haas B."/>
            <person name="Hansen N.F."/>
            <person name="Hughes B."/>
            <person name="Huizar L."/>
            <person name="Hunter J.L."/>
            <person name="Jenkins J."/>
            <person name="Johnson-Hopson C."/>
            <person name="Khan S."/>
            <person name="Khaykin E."/>
            <person name="Kim C.J."/>
            <person name="Koo H.L."/>
            <person name="Kremenetskaia I."/>
            <person name="Kurtz D.B."/>
            <person name="Kwan A."/>
            <person name="Lam B."/>
            <person name="Langin-Hooper S."/>
            <person name="Lee A."/>
            <person name="Lee J.M."/>
            <person name="Lenz C.A."/>
            <person name="Li J.H."/>
            <person name="Li Y.-P."/>
            <person name="Lin X."/>
            <person name="Liu S.X."/>
            <person name="Liu Z.A."/>
            <person name="Luros J.S."/>
            <person name="Maiti R."/>
            <person name="Marziali A."/>
            <person name="Militscher J."/>
            <person name="Miranda M."/>
            <person name="Nguyen M."/>
            <person name="Nierman W.C."/>
            <person name="Osborne B.I."/>
            <person name="Pai G."/>
            <person name="Peterson J."/>
            <person name="Pham P.K."/>
            <person name="Rizzo M."/>
            <person name="Rooney T."/>
            <person name="Rowley D."/>
            <person name="Sakano H."/>
            <person name="Salzberg S.L."/>
            <person name="Schwartz J.R."/>
            <person name="Shinn P."/>
            <person name="Southwick A.M."/>
            <person name="Sun H."/>
            <person name="Tallon L.J."/>
            <person name="Tambunga G."/>
            <person name="Toriumi M.J."/>
            <person name="Town C.D."/>
            <person name="Utterback T."/>
            <person name="Van Aken S."/>
            <person name="Vaysberg M."/>
            <person name="Vysotskaia V.S."/>
            <person name="Walker M."/>
            <person name="Wu D."/>
            <person name="Yu G."/>
            <person name="Fraser C.M."/>
            <person name="Venter J.C."/>
            <person name="Davis R.W."/>
        </authorList>
    </citation>
    <scope>NUCLEOTIDE SEQUENCE [LARGE SCALE GENOMIC DNA]</scope>
    <source>
        <strain>cv. Columbia</strain>
    </source>
</reference>
<reference key="2">
    <citation type="journal article" date="2017" name="Plant J.">
        <title>Araport11: a complete reannotation of the Arabidopsis thaliana reference genome.</title>
        <authorList>
            <person name="Cheng C.Y."/>
            <person name="Krishnakumar V."/>
            <person name="Chan A.P."/>
            <person name="Thibaud-Nissen F."/>
            <person name="Schobel S."/>
            <person name="Town C.D."/>
        </authorList>
    </citation>
    <scope>GENOME REANNOTATION</scope>
    <source>
        <strain>cv. Columbia</strain>
    </source>
</reference>
<reference key="3">
    <citation type="journal article" date="2006" name="Plant Biotechnol. J.">
        <title>Simultaneous high-throughput recombinational cloning of open reading frames in closed and open configurations.</title>
        <authorList>
            <person name="Underwood B.A."/>
            <person name="Vanderhaeghen R."/>
            <person name="Whitford R."/>
            <person name="Town C.D."/>
            <person name="Hilson P."/>
        </authorList>
    </citation>
    <scope>NUCLEOTIDE SEQUENCE [LARGE SCALE MRNA] (ISOFORM 2)</scope>
    <source>
        <strain>cv. Columbia</strain>
    </source>
</reference>
<gene>
    <name type="ordered locus">At1g60400</name>
    <name type="ORF">T13D8.27</name>
</gene>
<sequence length="403" mass="45864">MVRTSIKSIGSGIDRLSALPEHLLCRILSELSTKDSVRTSVLSKHWRNLWLHVPVLELETSDFPDNLVFREFIDRFVGFDKEIDLKSFDIFYDVNVLWYDDFLWMIDDVVKRRVCDLMVTNNPYVVNEKLVKMPISLYSCATLVNLNLSFVAMNNLPSESVCLPRVKTLYLHGVKLDGDSILGTLVSSCSVLEDLTVVTHPGDYEKVVCFRSQSVKSFTIESQCEYKDPNVEIDCPRLEYMCIREYQSESFVVHSIGPYAKVDVDIFFEVEYEDPLAISMIRNFLTGISKVREMTISSRTLEVIRGYHSMVKALPQFSNLSSLDALLVESYWELLPVFLGCCINLNSLVVELDGLSEIEEFKVSPLLQDSLSARGFVQQKTPVSVTKTSSERKIAAYFVKKSG</sequence>